<sequence length="75" mass="8392">MPHVDIKCFPRELTDEQKTALAADITEVLIRHLNSKESAVSVALTQVEPDAWQAVWDSEIAPQMAQLIKQPGYSM</sequence>
<proteinExistence type="inferred from homology"/>
<dbReference type="EC" id="5.3.2.-" evidence="1"/>
<dbReference type="EMBL" id="CP000647">
    <property type="protein sequence ID" value="ABR77326.1"/>
    <property type="molecule type" value="Genomic_DNA"/>
</dbReference>
<dbReference type="RefSeq" id="WP_004175957.1">
    <property type="nucleotide sequence ID" value="NC_009648.1"/>
</dbReference>
<dbReference type="SMR" id="A6T9Q5"/>
<dbReference type="STRING" id="272620.KPN_01895"/>
<dbReference type="PaxDb" id="272620-KPN_01895"/>
<dbReference type="EnsemblBacteria" id="ABR77326">
    <property type="protein sequence ID" value="ABR77326"/>
    <property type="gene ID" value="KPN_01895"/>
</dbReference>
<dbReference type="KEGG" id="kpn:KPN_01895"/>
<dbReference type="HOGENOM" id="CLU_183611_0_1_6"/>
<dbReference type="Proteomes" id="UP000000265">
    <property type="component" value="Chromosome"/>
</dbReference>
<dbReference type="GO" id="GO:0005737">
    <property type="term" value="C:cytoplasm"/>
    <property type="evidence" value="ECO:0007669"/>
    <property type="project" value="UniProtKB-SubCell"/>
</dbReference>
<dbReference type="GO" id="GO:0016862">
    <property type="term" value="F:intramolecular oxidoreductase activity, interconverting keto- and enol-groups"/>
    <property type="evidence" value="ECO:0007669"/>
    <property type="project" value="UniProtKB-UniRule"/>
</dbReference>
<dbReference type="Gene3D" id="3.30.429.10">
    <property type="entry name" value="Macrophage Migration Inhibitory Factor"/>
    <property type="match status" value="1"/>
</dbReference>
<dbReference type="HAMAP" id="MF_00718">
    <property type="entry name" value="Tautomerase_PptA"/>
    <property type="match status" value="1"/>
</dbReference>
<dbReference type="InterPro" id="IPR004370">
    <property type="entry name" value="4-OT-like_dom"/>
</dbReference>
<dbReference type="InterPro" id="IPR014347">
    <property type="entry name" value="Tautomerase/MIF_sf"/>
</dbReference>
<dbReference type="InterPro" id="IPR017284">
    <property type="entry name" value="Tautomerase_PptA"/>
</dbReference>
<dbReference type="NCBIfam" id="NF002324">
    <property type="entry name" value="PRK01271.1"/>
    <property type="match status" value="1"/>
</dbReference>
<dbReference type="Pfam" id="PF01361">
    <property type="entry name" value="Tautomerase"/>
    <property type="match status" value="1"/>
</dbReference>
<dbReference type="PIRSF" id="PIRSF037799">
    <property type="entry name" value="Tautomer_YdcE_prd"/>
    <property type="match status" value="1"/>
</dbReference>
<dbReference type="SUPFAM" id="SSF55331">
    <property type="entry name" value="Tautomerase/MIF"/>
    <property type="match status" value="1"/>
</dbReference>
<gene>
    <name evidence="1" type="primary">pptA</name>
    <name type="ordered locus">KPN78578_18650</name>
    <name type="ORF">KPN_01895</name>
</gene>
<organism>
    <name type="scientific">Klebsiella pneumoniae subsp. pneumoniae (strain ATCC 700721 / MGH 78578)</name>
    <dbReference type="NCBI Taxonomy" id="272620"/>
    <lineage>
        <taxon>Bacteria</taxon>
        <taxon>Pseudomonadati</taxon>
        <taxon>Pseudomonadota</taxon>
        <taxon>Gammaproteobacteria</taxon>
        <taxon>Enterobacterales</taxon>
        <taxon>Enterobacteriaceae</taxon>
        <taxon>Klebsiella/Raoultella group</taxon>
        <taxon>Klebsiella</taxon>
        <taxon>Klebsiella pneumoniae complex</taxon>
    </lineage>
</organism>
<feature type="initiator methionine" description="Removed" evidence="1">
    <location>
        <position position="1"/>
    </location>
</feature>
<feature type="chain" id="PRO_0000348345" description="Tautomerase PptA">
    <location>
        <begin position="2"/>
        <end position="75"/>
    </location>
</feature>
<feature type="active site" description="Proton acceptor; via imino nitrogen" evidence="1">
    <location>
        <position position="2"/>
    </location>
</feature>
<reference key="1">
    <citation type="submission" date="2006-09" db="EMBL/GenBank/DDBJ databases">
        <authorList>
            <consortium name="The Klebsiella pneumonia Genome Sequencing Project"/>
            <person name="McClelland M."/>
            <person name="Sanderson E.K."/>
            <person name="Spieth J."/>
            <person name="Clifton W.S."/>
            <person name="Latreille P."/>
            <person name="Sabo A."/>
            <person name="Pepin K."/>
            <person name="Bhonagiri V."/>
            <person name="Porwollik S."/>
            <person name="Ali J."/>
            <person name="Wilson R.K."/>
        </authorList>
    </citation>
    <scope>NUCLEOTIDE SEQUENCE [LARGE SCALE GENOMIC DNA]</scope>
    <source>
        <strain>ATCC 700721 / MGH 78578</strain>
    </source>
</reference>
<evidence type="ECO:0000255" key="1">
    <source>
        <dbReference type="HAMAP-Rule" id="MF_00718"/>
    </source>
</evidence>
<comment type="subunit">
    <text evidence="1">Homodimer.</text>
</comment>
<comment type="subcellular location">
    <subcellularLocation>
        <location evidence="1">Cytoplasm</location>
    </subcellularLocation>
</comment>
<comment type="similarity">
    <text evidence="1">Belongs to the 4-oxalocrotonate tautomerase family. PptA subfamily.</text>
</comment>
<accession>A6T9Q5</accession>
<protein>
    <recommendedName>
        <fullName evidence="1">Tautomerase PptA</fullName>
        <ecNumber evidence="1">5.3.2.-</ecNumber>
    </recommendedName>
</protein>
<name>PPTA_KLEP7</name>
<keyword id="KW-0963">Cytoplasm</keyword>
<keyword id="KW-0413">Isomerase</keyword>